<sequence>MKLSFSLPSKSKPKVTATTADGNNAVDDGTSKEFVTEFDPSKTLANSIPKYVIPPIENTWRPHKKMKNLDLPLQSGNAGSGLEFEPEVPLPGTEKPDNISYGLNLRQKVKDDSIGGDAVEERKVSMGEQLMLQSLRRDLMSLADDPTLEDFESVPVDGFGAALMAGYGWKPGKGIGKNAKEDVEIKEYKKWTAKEGLGFDPDRSKVVDVKAKVKESVKLDKKGVGINGGDVFFVGKEVRIIAGRDVGLKGKIVEKPGSDFFVIKISGSEEEVKVGVNEVADLGSKEEEKCLKKLKDLQLNDREKDKKTSGRGRGAERGSRSEVRASEKQDRGQTRERKVKPSWLRSHIKVRIVSKDWKGGRLYLKKGKVVDVVGPTTCDITMDETQELVQGVDQELLETALPRRGGPVLVLSGKHKGVYGNLVEKDLDKETGVVRDLDNHKMLDVRLDQVAEYMGDMDDIEY</sequence>
<feature type="chain" id="PRO_0000244843" description="Protein MOS2">
    <location>
        <begin position="1"/>
        <end position="462"/>
    </location>
</feature>
<feature type="domain" description="G-patch" evidence="1">
    <location>
        <begin position="156"/>
        <end position="202"/>
    </location>
</feature>
<feature type="domain" description="KOW 1">
    <location>
        <begin position="231"/>
        <end position="258"/>
    </location>
</feature>
<feature type="domain" description="KOW 2">
    <location>
        <begin position="401"/>
        <end position="428"/>
    </location>
</feature>
<feature type="region of interest" description="Disordered" evidence="2">
    <location>
        <begin position="1"/>
        <end position="32"/>
    </location>
</feature>
<feature type="region of interest" description="Disordered" evidence="2">
    <location>
        <begin position="301"/>
        <end position="340"/>
    </location>
</feature>
<feature type="compositionally biased region" description="Low complexity" evidence="2">
    <location>
        <begin position="1"/>
        <end position="10"/>
    </location>
</feature>
<feature type="compositionally biased region" description="Basic and acidic residues" evidence="2">
    <location>
        <begin position="301"/>
        <end position="336"/>
    </location>
</feature>
<organism>
    <name type="scientific">Arabidopsis thaliana</name>
    <name type="common">Mouse-ear cress</name>
    <dbReference type="NCBI Taxonomy" id="3702"/>
    <lineage>
        <taxon>Eukaryota</taxon>
        <taxon>Viridiplantae</taxon>
        <taxon>Streptophyta</taxon>
        <taxon>Embryophyta</taxon>
        <taxon>Tracheophyta</taxon>
        <taxon>Spermatophyta</taxon>
        <taxon>Magnoliopsida</taxon>
        <taxon>eudicotyledons</taxon>
        <taxon>Gunneridae</taxon>
        <taxon>Pentapetalae</taxon>
        <taxon>rosids</taxon>
        <taxon>malvids</taxon>
        <taxon>Brassicales</taxon>
        <taxon>Brassicaceae</taxon>
        <taxon>Camelineae</taxon>
        <taxon>Arabidopsis</taxon>
    </lineage>
</organism>
<gene>
    <name type="primary">MOS2</name>
    <name type="ordered locus">At1g33520</name>
    <name type="ORF">F10C21.16</name>
</gene>
<comment type="function">
    <text evidence="3">Required for innate and induced resistance to pathogens such as compatible and incompatible isolates of P.syringae and P.parasitica.</text>
</comment>
<comment type="subcellular location">
    <subcellularLocation>
        <location evidence="3">Nucleus</location>
    </subcellularLocation>
</comment>
<comment type="similarity">
    <text evidence="4">Belongs to the MOS2 family.</text>
</comment>
<name>MOS2_ARATH</name>
<proteinExistence type="evidence at transcript level"/>
<evidence type="ECO:0000255" key="1">
    <source>
        <dbReference type="PROSITE-ProRule" id="PRU00092"/>
    </source>
</evidence>
<evidence type="ECO:0000256" key="2">
    <source>
        <dbReference type="SAM" id="MobiDB-lite"/>
    </source>
</evidence>
<evidence type="ECO:0000269" key="3">
    <source>
    </source>
</evidence>
<evidence type="ECO:0000305" key="4"/>
<keyword id="KW-0539">Nucleus</keyword>
<keyword id="KW-0611">Plant defense</keyword>
<keyword id="KW-1185">Reference proteome</keyword>
<keyword id="KW-0677">Repeat</keyword>
<accession>Q9C801</accession>
<dbReference type="EMBL" id="DQ202264">
    <property type="protein sequence ID" value="ABA64466.1"/>
    <property type="molecule type" value="mRNA"/>
</dbReference>
<dbReference type="EMBL" id="AC051630">
    <property type="protein sequence ID" value="AAG51225.1"/>
    <property type="molecule type" value="Genomic_DNA"/>
</dbReference>
<dbReference type="EMBL" id="CP002684">
    <property type="protein sequence ID" value="AEE31602.1"/>
    <property type="molecule type" value="Genomic_DNA"/>
</dbReference>
<dbReference type="EMBL" id="AY091044">
    <property type="protein sequence ID" value="AAM13865.1"/>
    <property type="molecule type" value="mRNA"/>
</dbReference>
<dbReference type="EMBL" id="BT006036">
    <property type="protein sequence ID" value="AAP04023.1"/>
    <property type="molecule type" value="mRNA"/>
</dbReference>
<dbReference type="PIR" id="A86459">
    <property type="entry name" value="A86459"/>
</dbReference>
<dbReference type="RefSeq" id="NP_174617.1">
    <property type="nucleotide sequence ID" value="NM_103076.4"/>
</dbReference>
<dbReference type="SMR" id="Q9C801"/>
<dbReference type="BioGRID" id="25479">
    <property type="interactions" value="1"/>
</dbReference>
<dbReference type="FunCoup" id="Q9C801">
    <property type="interactions" value="4110"/>
</dbReference>
<dbReference type="STRING" id="3702.Q9C801"/>
<dbReference type="GlyGen" id="Q9C801">
    <property type="glycosylation" value="1 site"/>
</dbReference>
<dbReference type="iPTMnet" id="Q9C801"/>
<dbReference type="PaxDb" id="3702-AT1G33520.1"/>
<dbReference type="ProteomicsDB" id="238309"/>
<dbReference type="EnsemblPlants" id="AT1G33520.1">
    <property type="protein sequence ID" value="AT1G33520.1"/>
    <property type="gene ID" value="AT1G33520"/>
</dbReference>
<dbReference type="GeneID" id="840246"/>
<dbReference type="Gramene" id="AT1G33520.1">
    <property type="protein sequence ID" value="AT1G33520.1"/>
    <property type="gene ID" value="AT1G33520"/>
</dbReference>
<dbReference type="KEGG" id="ath:AT1G33520"/>
<dbReference type="Araport" id="AT1G33520"/>
<dbReference type="TAIR" id="AT1G33520">
    <property type="gene designation" value="MOS2"/>
</dbReference>
<dbReference type="eggNOG" id="KOG4315">
    <property type="taxonomic scope" value="Eukaryota"/>
</dbReference>
<dbReference type="HOGENOM" id="CLU_031427_1_0_1"/>
<dbReference type="InParanoid" id="Q9C801"/>
<dbReference type="OMA" id="AHKDKEK"/>
<dbReference type="OrthoDB" id="5577072at2759"/>
<dbReference type="PhylomeDB" id="Q9C801"/>
<dbReference type="CD-CODE" id="4299E36E">
    <property type="entry name" value="Nucleolus"/>
</dbReference>
<dbReference type="PRO" id="PR:Q9C801"/>
<dbReference type="Proteomes" id="UP000006548">
    <property type="component" value="Chromosome 1"/>
</dbReference>
<dbReference type="ExpressionAtlas" id="Q9C801">
    <property type="expression patterns" value="baseline and differential"/>
</dbReference>
<dbReference type="GO" id="GO:0005634">
    <property type="term" value="C:nucleus"/>
    <property type="evidence" value="ECO:0000314"/>
    <property type="project" value="TAIR"/>
</dbReference>
<dbReference type="GO" id="GO:0003723">
    <property type="term" value="F:RNA binding"/>
    <property type="evidence" value="ECO:0000250"/>
    <property type="project" value="TAIR"/>
</dbReference>
<dbReference type="GO" id="GO:0042742">
    <property type="term" value="P:defense response to bacterium"/>
    <property type="evidence" value="ECO:0000315"/>
    <property type="project" value="TAIR"/>
</dbReference>
<dbReference type="GO" id="GO:0002758">
    <property type="term" value="P:innate immune response-activating signaling pathway"/>
    <property type="evidence" value="ECO:0000315"/>
    <property type="project" value="TAIR"/>
</dbReference>
<dbReference type="GO" id="GO:0000398">
    <property type="term" value="P:mRNA splicing, via spliceosome"/>
    <property type="evidence" value="ECO:0007669"/>
    <property type="project" value="InterPro"/>
</dbReference>
<dbReference type="CDD" id="cd13153">
    <property type="entry name" value="KOW_GPKOW_B"/>
    <property type="match status" value="1"/>
</dbReference>
<dbReference type="Gene3D" id="2.30.30.140">
    <property type="match status" value="1"/>
</dbReference>
<dbReference type="InterPro" id="IPR000467">
    <property type="entry name" value="G_patch_dom"/>
</dbReference>
<dbReference type="InterPro" id="IPR041994">
    <property type="entry name" value="GPKOW_KOW2"/>
</dbReference>
<dbReference type="InterPro" id="IPR005824">
    <property type="entry name" value="KOW"/>
</dbReference>
<dbReference type="InterPro" id="IPR045166">
    <property type="entry name" value="Spp2-like"/>
</dbReference>
<dbReference type="InterPro" id="IPR026822">
    <property type="entry name" value="Spp2/MOS2_G-patch"/>
</dbReference>
<dbReference type="PANTHER" id="PTHR15818">
    <property type="entry name" value="G PATCH AND KOW-CONTAINING"/>
    <property type="match status" value="1"/>
</dbReference>
<dbReference type="PANTHER" id="PTHR15818:SF2">
    <property type="entry name" value="G-PATCH DOMAIN AND KOW MOTIFS-CONTAINING PROTEIN"/>
    <property type="match status" value="1"/>
</dbReference>
<dbReference type="Pfam" id="PF12656">
    <property type="entry name" value="G-patch_2"/>
    <property type="match status" value="1"/>
</dbReference>
<dbReference type="Pfam" id="PF25088">
    <property type="entry name" value="GPKOW_C"/>
    <property type="match status" value="1"/>
</dbReference>
<dbReference type="SMART" id="SM00443">
    <property type="entry name" value="G_patch"/>
    <property type="match status" value="1"/>
</dbReference>
<dbReference type="SMART" id="SM00739">
    <property type="entry name" value="KOW"/>
    <property type="match status" value="2"/>
</dbReference>
<dbReference type="PROSITE" id="PS50174">
    <property type="entry name" value="G_PATCH"/>
    <property type="match status" value="1"/>
</dbReference>
<protein>
    <recommendedName>
        <fullName>Protein MOS2</fullName>
    </recommendedName>
</protein>
<reference key="1">
    <citation type="journal article" date="2005" name="Curr. Biol.">
        <title>MOS2, a protein containing G-patch and KOW motifs, is essential for innate immunity in Arabidopsis thaliana.</title>
        <authorList>
            <person name="Zhang Y."/>
            <person name="Cheng Y.T."/>
            <person name="Bi D."/>
            <person name="Palma K."/>
            <person name="Li X."/>
        </authorList>
    </citation>
    <scope>NUCLEOTIDE SEQUENCE [MRNA]</scope>
    <scope>FUNCTION</scope>
    <scope>SUBCELLULAR LOCATION</scope>
    <source>
        <strain>cv. Columbia</strain>
    </source>
</reference>
<reference key="2">
    <citation type="journal article" date="2000" name="Nature">
        <title>Sequence and analysis of chromosome 1 of the plant Arabidopsis thaliana.</title>
        <authorList>
            <person name="Theologis A."/>
            <person name="Ecker J.R."/>
            <person name="Palm C.J."/>
            <person name="Federspiel N.A."/>
            <person name="Kaul S."/>
            <person name="White O."/>
            <person name="Alonso J."/>
            <person name="Altafi H."/>
            <person name="Araujo R."/>
            <person name="Bowman C.L."/>
            <person name="Brooks S.Y."/>
            <person name="Buehler E."/>
            <person name="Chan A."/>
            <person name="Chao Q."/>
            <person name="Chen H."/>
            <person name="Cheuk R.F."/>
            <person name="Chin C.W."/>
            <person name="Chung M.K."/>
            <person name="Conn L."/>
            <person name="Conway A.B."/>
            <person name="Conway A.R."/>
            <person name="Creasy T.H."/>
            <person name="Dewar K."/>
            <person name="Dunn P."/>
            <person name="Etgu P."/>
            <person name="Feldblyum T.V."/>
            <person name="Feng J.-D."/>
            <person name="Fong B."/>
            <person name="Fujii C.Y."/>
            <person name="Gill J.E."/>
            <person name="Goldsmith A.D."/>
            <person name="Haas B."/>
            <person name="Hansen N.F."/>
            <person name="Hughes B."/>
            <person name="Huizar L."/>
            <person name="Hunter J.L."/>
            <person name="Jenkins J."/>
            <person name="Johnson-Hopson C."/>
            <person name="Khan S."/>
            <person name="Khaykin E."/>
            <person name="Kim C.J."/>
            <person name="Koo H.L."/>
            <person name="Kremenetskaia I."/>
            <person name="Kurtz D.B."/>
            <person name="Kwan A."/>
            <person name="Lam B."/>
            <person name="Langin-Hooper S."/>
            <person name="Lee A."/>
            <person name="Lee J.M."/>
            <person name="Lenz C.A."/>
            <person name="Li J.H."/>
            <person name="Li Y.-P."/>
            <person name="Lin X."/>
            <person name="Liu S.X."/>
            <person name="Liu Z.A."/>
            <person name="Luros J.S."/>
            <person name="Maiti R."/>
            <person name="Marziali A."/>
            <person name="Militscher J."/>
            <person name="Miranda M."/>
            <person name="Nguyen M."/>
            <person name="Nierman W.C."/>
            <person name="Osborne B.I."/>
            <person name="Pai G."/>
            <person name="Peterson J."/>
            <person name="Pham P.K."/>
            <person name="Rizzo M."/>
            <person name="Rooney T."/>
            <person name="Rowley D."/>
            <person name="Sakano H."/>
            <person name="Salzberg S.L."/>
            <person name="Schwartz J.R."/>
            <person name="Shinn P."/>
            <person name="Southwick A.M."/>
            <person name="Sun H."/>
            <person name="Tallon L.J."/>
            <person name="Tambunga G."/>
            <person name="Toriumi M.J."/>
            <person name="Town C.D."/>
            <person name="Utterback T."/>
            <person name="Van Aken S."/>
            <person name="Vaysberg M."/>
            <person name="Vysotskaia V.S."/>
            <person name="Walker M."/>
            <person name="Wu D."/>
            <person name="Yu G."/>
            <person name="Fraser C.M."/>
            <person name="Venter J.C."/>
            <person name="Davis R.W."/>
        </authorList>
    </citation>
    <scope>NUCLEOTIDE SEQUENCE [LARGE SCALE GENOMIC DNA]</scope>
    <source>
        <strain>cv. Columbia</strain>
    </source>
</reference>
<reference key="3">
    <citation type="journal article" date="2017" name="Plant J.">
        <title>Araport11: a complete reannotation of the Arabidopsis thaliana reference genome.</title>
        <authorList>
            <person name="Cheng C.Y."/>
            <person name="Krishnakumar V."/>
            <person name="Chan A.P."/>
            <person name="Thibaud-Nissen F."/>
            <person name="Schobel S."/>
            <person name="Town C.D."/>
        </authorList>
    </citation>
    <scope>GENOME REANNOTATION</scope>
    <source>
        <strain>cv. Columbia</strain>
    </source>
</reference>
<reference key="4">
    <citation type="journal article" date="2003" name="Science">
        <title>Empirical analysis of transcriptional activity in the Arabidopsis genome.</title>
        <authorList>
            <person name="Yamada K."/>
            <person name="Lim J."/>
            <person name="Dale J.M."/>
            <person name="Chen H."/>
            <person name="Shinn P."/>
            <person name="Palm C.J."/>
            <person name="Southwick A.M."/>
            <person name="Wu H.C."/>
            <person name="Kim C.J."/>
            <person name="Nguyen M."/>
            <person name="Pham P.K."/>
            <person name="Cheuk R.F."/>
            <person name="Karlin-Newmann G."/>
            <person name="Liu S.X."/>
            <person name="Lam B."/>
            <person name="Sakano H."/>
            <person name="Wu T."/>
            <person name="Yu G."/>
            <person name="Miranda M."/>
            <person name="Quach H.L."/>
            <person name="Tripp M."/>
            <person name="Chang C.H."/>
            <person name="Lee J.M."/>
            <person name="Toriumi M.J."/>
            <person name="Chan M.M."/>
            <person name="Tang C.C."/>
            <person name="Onodera C.S."/>
            <person name="Deng J.M."/>
            <person name="Akiyama K."/>
            <person name="Ansari Y."/>
            <person name="Arakawa T."/>
            <person name="Banh J."/>
            <person name="Banno F."/>
            <person name="Bowser L."/>
            <person name="Brooks S.Y."/>
            <person name="Carninci P."/>
            <person name="Chao Q."/>
            <person name="Choy N."/>
            <person name="Enju A."/>
            <person name="Goldsmith A.D."/>
            <person name="Gurjal M."/>
            <person name="Hansen N.F."/>
            <person name="Hayashizaki Y."/>
            <person name="Johnson-Hopson C."/>
            <person name="Hsuan V.W."/>
            <person name="Iida K."/>
            <person name="Karnes M."/>
            <person name="Khan S."/>
            <person name="Koesema E."/>
            <person name="Ishida J."/>
            <person name="Jiang P.X."/>
            <person name="Jones T."/>
            <person name="Kawai J."/>
            <person name="Kamiya A."/>
            <person name="Meyers C."/>
            <person name="Nakajima M."/>
            <person name="Narusaka M."/>
            <person name="Seki M."/>
            <person name="Sakurai T."/>
            <person name="Satou M."/>
            <person name="Tamse R."/>
            <person name="Vaysberg M."/>
            <person name="Wallender E.K."/>
            <person name="Wong C."/>
            <person name="Yamamura Y."/>
            <person name="Yuan S."/>
            <person name="Shinozaki K."/>
            <person name="Davis R.W."/>
            <person name="Theologis A."/>
            <person name="Ecker J.R."/>
        </authorList>
    </citation>
    <scope>NUCLEOTIDE SEQUENCE [LARGE SCALE MRNA]</scope>
    <source>
        <strain>cv. Columbia</strain>
    </source>
</reference>